<proteinExistence type="inferred from homology"/>
<gene>
    <name type="ordered locus">MT2261</name>
</gene>
<dbReference type="EMBL" id="AE000516">
    <property type="protein sequence ID" value="AAK46547.1"/>
    <property type="molecule type" value="Genomic_DNA"/>
</dbReference>
<dbReference type="PIR" id="F70785">
    <property type="entry name" value="F70785"/>
</dbReference>
<dbReference type="SMR" id="P9WMT6"/>
<dbReference type="KEGG" id="mtc:MT2261"/>
<dbReference type="HOGENOM" id="CLU_028255_0_1_11"/>
<dbReference type="Proteomes" id="UP000001020">
    <property type="component" value="Chromosome"/>
</dbReference>
<dbReference type="GO" id="GO:0008887">
    <property type="term" value="F:glycerate kinase activity"/>
    <property type="evidence" value="ECO:0007669"/>
    <property type="project" value="InterPro"/>
</dbReference>
<dbReference type="GO" id="GO:0031388">
    <property type="term" value="P:organic acid phosphorylation"/>
    <property type="evidence" value="ECO:0007669"/>
    <property type="project" value="InterPro"/>
</dbReference>
<dbReference type="FunFam" id="3.90.1510.10:FF:000002">
    <property type="entry name" value="Glycerate kinase"/>
    <property type="match status" value="1"/>
</dbReference>
<dbReference type="Gene3D" id="3.40.50.10350">
    <property type="entry name" value="Glycerate kinase, domain 1"/>
    <property type="match status" value="1"/>
</dbReference>
<dbReference type="Gene3D" id="3.90.1510.10">
    <property type="entry name" value="Glycerate kinase, domain 2"/>
    <property type="match status" value="1"/>
</dbReference>
<dbReference type="InterPro" id="IPR018193">
    <property type="entry name" value="Glyc_kinase_flavodox-like_fold"/>
</dbReference>
<dbReference type="InterPro" id="IPR004381">
    <property type="entry name" value="Glycerate_kinase"/>
</dbReference>
<dbReference type="InterPro" id="IPR018197">
    <property type="entry name" value="Glycerate_kinase_RE-like"/>
</dbReference>
<dbReference type="InterPro" id="IPR036129">
    <property type="entry name" value="Glycerate_kinase_sf"/>
</dbReference>
<dbReference type="PANTHER" id="PTHR21599">
    <property type="entry name" value="GLYCERATE KINASE"/>
    <property type="match status" value="1"/>
</dbReference>
<dbReference type="PANTHER" id="PTHR21599:SF0">
    <property type="entry name" value="GLYCERATE KINASE"/>
    <property type="match status" value="1"/>
</dbReference>
<dbReference type="Pfam" id="PF02595">
    <property type="entry name" value="Gly_kinase"/>
    <property type="match status" value="2"/>
</dbReference>
<dbReference type="PIRSF" id="PIRSF006078">
    <property type="entry name" value="GlxK"/>
    <property type="match status" value="1"/>
</dbReference>
<dbReference type="SUPFAM" id="SSF110738">
    <property type="entry name" value="Glycerate kinase I"/>
    <property type="match status" value="1"/>
</dbReference>
<accession>P9WMT6</accession>
<accession>L0TBL7</accession>
<accession>P64288</accession>
<accession>Q10394</accession>
<sequence>MKGSQASDDATGSLGPGRLQLPAMRVLVAPDCYGDSLSAVEAAAAIATGWTRSRPGDSFIVAPQSDGGPGFVEVLGSRLGETRRLRVCGPLNTVVNAAWVFDPGSATAYLECAQACGLGLLGGPPTPETALAAHSKGVGQLIAAALRAGAARIVVGLGGSACTDGGKGMIAELGGLDAARRQLADVEVIAASDVEYPLLGPWGTARVFAPQKGADMATVAVLEGRLAAWAIELDAAAGRGVSAEPGAGAAGGIGAGLLAVGGRYQSGAAIIAEHTHFADDLADAELIVTGEGRFDEQSLHGKVVGAIAAAARPLAIPVIVLAGQVSLDKSALRSAGIMAALSIAEYAGSVRLALADAANQLMGLASQVAARLGNSGPSGYR</sequence>
<protein>
    <recommendedName>
        <fullName>Uncharacterized protein MT2261</fullName>
    </recommendedName>
</protein>
<organism>
    <name type="scientific">Mycobacterium tuberculosis (strain CDC 1551 / Oshkosh)</name>
    <dbReference type="NCBI Taxonomy" id="83331"/>
    <lineage>
        <taxon>Bacteria</taxon>
        <taxon>Bacillati</taxon>
        <taxon>Actinomycetota</taxon>
        <taxon>Actinomycetes</taxon>
        <taxon>Mycobacteriales</taxon>
        <taxon>Mycobacteriaceae</taxon>
        <taxon>Mycobacterium</taxon>
        <taxon>Mycobacterium tuberculosis complex</taxon>
    </lineage>
</organism>
<name>Y2205_MYCTO</name>
<keyword id="KW-0418">Kinase</keyword>
<keyword id="KW-1185">Reference proteome</keyword>
<keyword id="KW-0808">Transferase</keyword>
<feature type="chain" id="PRO_0000427245" description="Uncharacterized protein MT2261">
    <location>
        <begin position="1"/>
        <end position="381"/>
    </location>
</feature>
<comment type="similarity">
    <text evidence="1">Belongs to the glycerate kinase type-1 family.</text>
</comment>
<evidence type="ECO:0000305" key="1"/>
<reference key="1">
    <citation type="journal article" date="2002" name="J. Bacteriol.">
        <title>Whole-genome comparison of Mycobacterium tuberculosis clinical and laboratory strains.</title>
        <authorList>
            <person name="Fleischmann R.D."/>
            <person name="Alland D."/>
            <person name="Eisen J.A."/>
            <person name="Carpenter L."/>
            <person name="White O."/>
            <person name="Peterson J.D."/>
            <person name="DeBoy R.T."/>
            <person name="Dodson R.J."/>
            <person name="Gwinn M.L."/>
            <person name="Haft D.H."/>
            <person name="Hickey E.K."/>
            <person name="Kolonay J.F."/>
            <person name="Nelson W.C."/>
            <person name="Umayam L.A."/>
            <person name="Ermolaeva M.D."/>
            <person name="Salzberg S.L."/>
            <person name="Delcher A."/>
            <person name="Utterback T.R."/>
            <person name="Weidman J.F."/>
            <person name="Khouri H.M."/>
            <person name="Gill J."/>
            <person name="Mikula A."/>
            <person name="Bishai W."/>
            <person name="Jacobs W.R. Jr."/>
            <person name="Venter J.C."/>
            <person name="Fraser C.M."/>
        </authorList>
    </citation>
    <scope>NUCLEOTIDE SEQUENCE [LARGE SCALE GENOMIC DNA]</scope>
    <source>
        <strain>CDC 1551 / Oshkosh</strain>
    </source>
</reference>